<reference key="1">
    <citation type="journal article" date="2009" name="PLoS Genet.">
        <title>Organised genome dynamics in the Escherichia coli species results in highly diverse adaptive paths.</title>
        <authorList>
            <person name="Touchon M."/>
            <person name="Hoede C."/>
            <person name="Tenaillon O."/>
            <person name="Barbe V."/>
            <person name="Baeriswyl S."/>
            <person name="Bidet P."/>
            <person name="Bingen E."/>
            <person name="Bonacorsi S."/>
            <person name="Bouchier C."/>
            <person name="Bouvet O."/>
            <person name="Calteau A."/>
            <person name="Chiapello H."/>
            <person name="Clermont O."/>
            <person name="Cruveiller S."/>
            <person name="Danchin A."/>
            <person name="Diard M."/>
            <person name="Dossat C."/>
            <person name="Karoui M.E."/>
            <person name="Frapy E."/>
            <person name="Garry L."/>
            <person name="Ghigo J.M."/>
            <person name="Gilles A.M."/>
            <person name="Johnson J."/>
            <person name="Le Bouguenec C."/>
            <person name="Lescat M."/>
            <person name="Mangenot S."/>
            <person name="Martinez-Jehanne V."/>
            <person name="Matic I."/>
            <person name="Nassif X."/>
            <person name="Oztas S."/>
            <person name="Petit M.A."/>
            <person name="Pichon C."/>
            <person name="Rouy Z."/>
            <person name="Ruf C.S."/>
            <person name="Schneider D."/>
            <person name="Tourret J."/>
            <person name="Vacherie B."/>
            <person name="Vallenet D."/>
            <person name="Medigue C."/>
            <person name="Rocha E.P.C."/>
            <person name="Denamur E."/>
        </authorList>
    </citation>
    <scope>NUCLEOTIDE SEQUENCE [LARGE SCALE GENOMIC DNA]</scope>
    <source>
        <strain>ED1a</strain>
    </source>
</reference>
<organism>
    <name type="scientific">Escherichia coli O81 (strain ED1a)</name>
    <dbReference type="NCBI Taxonomy" id="585397"/>
    <lineage>
        <taxon>Bacteria</taxon>
        <taxon>Pseudomonadati</taxon>
        <taxon>Pseudomonadota</taxon>
        <taxon>Gammaproteobacteria</taxon>
        <taxon>Enterobacterales</taxon>
        <taxon>Enterobacteriaceae</taxon>
        <taxon>Escherichia</taxon>
    </lineage>
</organism>
<feature type="chain" id="PRO_1000148383" description="UPF0301 protein YqgE">
    <location>
        <begin position="1"/>
        <end position="187"/>
    </location>
</feature>
<evidence type="ECO:0000255" key="1">
    <source>
        <dbReference type="HAMAP-Rule" id="MF_00758"/>
    </source>
</evidence>
<proteinExistence type="inferred from homology"/>
<sequence length="187" mass="20686">MNLQHHFLIAMPALQDPIFRRSVVYICEHNTNGAMGIIVNKPLENLKIEGILEKLKITPEPRDESIRLDKPVMLGGPLAEDRGFILHTPPSNFASSIRISDNTVMTTSRDVLETLGTDKQPSDVLVALGYASWEKGQLEQEILDNAWLTAPADLNILFKTPIADRWREAAKLIGVDILTMPGVAGHA</sequence>
<accession>B7MZP7</accession>
<name>YQGE_ECO81</name>
<dbReference type="EMBL" id="CU928162">
    <property type="protein sequence ID" value="CAR09565.2"/>
    <property type="molecule type" value="Genomic_DNA"/>
</dbReference>
<dbReference type="RefSeq" id="WP_001053178.1">
    <property type="nucleotide sequence ID" value="NC_011745.1"/>
</dbReference>
<dbReference type="SMR" id="B7MZP7"/>
<dbReference type="KEGG" id="ecq:ECED1_3411"/>
<dbReference type="HOGENOM" id="CLU_057596_1_0_6"/>
<dbReference type="Proteomes" id="UP000000748">
    <property type="component" value="Chromosome"/>
</dbReference>
<dbReference type="GO" id="GO:0005829">
    <property type="term" value="C:cytosol"/>
    <property type="evidence" value="ECO:0007669"/>
    <property type="project" value="TreeGrafter"/>
</dbReference>
<dbReference type="FunFam" id="3.30.70.1300:FF:000001">
    <property type="entry name" value="UPF0301 protein YqgE"/>
    <property type="match status" value="1"/>
</dbReference>
<dbReference type="Gene3D" id="3.40.1740.10">
    <property type="entry name" value="VC0467-like"/>
    <property type="match status" value="1"/>
</dbReference>
<dbReference type="Gene3D" id="3.30.70.1300">
    <property type="entry name" value="VC0467-like domains"/>
    <property type="match status" value="1"/>
</dbReference>
<dbReference type="HAMAP" id="MF_00758">
    <property type="entry name" value="UPF0301"/>
    <property type="match status" value="1"/>
</dbReference>
<dbReference type="InterPro" id="IPR003774">
    <property type="entry name" value="AlgH-like"/>
</dbReference>
<dbReference type="NCBIfam" id="NF001266">
    <property type="entry name" value="PRK00228.1-1"/>
    <property type="match status" value="1"/>
</dbReference>
<dbReference type="PANTHER" id="PTHR30327">
    <property type="entry name" value="UNCHARACTERIZED PROTEIN YQGE"/>
    <property type="match status" value="1"/>
</dbReference>
<dbReference type="PANTHER" id="PTHR30327:SF1">
    <property type="entry name" value="UPF0301 PROTEIN YQGE"/>
    <property type="match status" value="1"/>
</dbReference>
<dbReference type="Pfam" id="PF02622">
    <property type="entry name" value="DUF179"/>
    <property type="match status" value="1"/>
</dbReference>
<dbReference type="SUPFAM" id="SSF143456">
    <property type="entry name" value="VC0467-like"/>
    <property type="match status" value="1"/>
</dbReference>
<gene>
    <name evidence="1" type="primary">yqgE</name>
    <name type="ordered locus">ECED1_3411</name>
</gene>
<protein>
    <recommendedName>
        <fullName evidence="1">UPF0301 protein YqgE</fullName>
    </recommendedName>
</protein>
<comment type="similarity">
    <text evidence="1">Belongs to the UPF0301 (AlgH) family.</text>
</comment>